<dbReference type="EMBL" id="U43728">
    <property type="protein sequence ID" value="AAC46996.1"/>
    <property type="molecule type" value="mRNA"/>
</dbReference>
<dbReference type="RefSeq" id="XP_030036516.1">
    <property type="nucleotide sequence ID" value="XM_030180656.2"/>
</dbReference>
<dbReference type="BMRB" id="P54814"/>
<dbReference type="SMR" id="P54814"/>
<dbReference type="EnsemblMetazoa" id="XM_030180656.2">
    <property type="protein sequence ID" value="XP_030036516.1"/>
    <property type="gene ID" value="LOC115452188"/>
</dbReference>
<dbReference type="GeneID" id="115452188"/>
<dbReference type="OrthoDB" id="1154031at2759"/>
<dbReference type="GO" id="GO:0005737">
    <property type="term" value="C:cytoplasm"/>
    <property type="evidence" value="ECO:0007669"/>
    <property type="project" value="UniProtKB-SubCell"/>
</dbReference>
<dbReference type="GO" id="GO:0005634">
    <property type="term" value="C:nucleus"/>
    <property type="evidence" value="ECO:0007669"/>
    <property type="project" value="UniProtKB-SubCell"/>
</dbReference>
<dbReference type="GO" id="GO:0000502">
    <property type="term" value="C:proteasome complex"/>
    <property type="evidence" value="ECO:0007669"/>
    <property type="project" value="UniProtKB-KW"/>
</dbReference>
<dbReference type="GO" id="GO:0005524">
    <property type="term" value="F:ATP binding"/>
    <property type="evidence" value="ECO:0007669"/>
    <property type="project" value="UniProtKB-KW"/>
</dbReference>
<dbReference type="GO" id="GO:0016887">
    <property type="term" value="F:ATP hydrolysis activity"/>
    <property type="evidence" value="ECO:0007669"/>
    <property type="project" value="InterPro"/>
</dbReference>
<dbReference type="CDD" id="cd19502">
    <property type="entry name" value="RecA-like_PAN_like"/>
    <property type="match status" value="1"/>
</dbReference>
<dbReference type="FunFam" id="1.10.8.60:FF:000006">
    <property type="entry name" value="26S protease regulatory subunit 8"/>
    <property type="match status" value="1"/>
</dbReference>
<dbReference type="FunFam" id="2.40.50.140:FF:000044">
    <property type="entry name" value="26S protease regulatory subunit 8"/>
    <property type="match status" value="1"/>
</dbReference>
<dbReference type="FunFam" id="3.40.50.300:FF:000030">
    <property type="entry name" value="26S protease regulatory subunit 8"/>
    <property type="match status" value="1"/>
</dbReference>
<dbReference type="Gene3D" id="1.10.8.60">
    <property type="match status" value="1"/>
</dbReference>
<dbReference type="Gene3D" id="2.40.50.140">
    <property type="entry name" value="Nucleic acid-binding proteins"/>
    <property type="match status" value="1"/>
</dbReference>
<dbReference type="Gene3D" id="3.40.50.300">
    <property type="entry name" value="P-loop containing nucleotide triphosphate hydrolases"/>
    <property type="match status" value="1"/>
</dbReference>
<dbReference type="InterPro" id="IPR050221">
    <property type="entry name" value="26S_Proteasome_ATPase"/>
</dbReference>
<dbReference type="InterPro" id="IPR003593">
    <property type="entry name" value="AAA+_ATPase"/>
</dbReference>
<dbReference type="InterPro" id="IPR041569">
    <property type="entry name" value="AAA_lid_3"/>
</dbReference>
<dbReference type="InterPro" id="IPR003959">
    <property type="entry name" value="ATPase_AAA_core"/>
</dbReference>
<dbReference type="InterPro" id="IPR003960">
    <property type="entry name" value="ATPase_AAA_CS"/>
</dbReference>
<dbReference type="InterPro" id="IPR012340">
    <property type="entry name" value="NA-bd_OB-fold"/>
</dbReference>
<dbReference type="InterPro" id="IPR027417">
    <property type="entry name" value="P-loop_NTPase"/>
</dbReference>
<dbReference type="InterPro" id="IPR032501">
    <property type="entry name" value="Prot_ATP_ID_OB_2nd"/>
</dbReference>
<dbReference type="PANTHER" id="PTHR23073">
    <property type="entry name" value="26S PROTEASOME REGULATORY SUBUNIT"/>
    <property type="match status" value="1"/>
</dbReference>
<dbReference type="Pfam" id="PF00004">
    <property type="entry name" value="AAA"/>
    <property type="match status" value="1"/>
</dbReference>
<dbReference type="Pfam" id="PF17862">
    <property type="entry name" value="AAA_lid_3"/>
    <property type="match status" value="1"/>
</dbReference>
<dbReference type="Pfam" id="PF16450">
    <property type="entry name" value="Prot_ATP_ID_OB_C"/>
    <property type="match status" value="1"/>
</dbReference>
<dbReference type="SMART" id="SM00382">
    <property type="entry name" value="AAA"/>
    <property type="match status" value="1"/>
</dbReference>
<dbReference type="SUPFAM" id="SSF52540">
    <property type="entry name" value="P-loop containing nucleoside triphosphate hydrolases"/>
    <property type="match status" value="1"/>
</dbReference>
<dbReference type="PROSITE" id="PS00674">
    <property type="entry name" value="AAA"/>
    <property type="match status" value="1"/>
</dbReference>
<protein>
    <recommendedName>
        <fullName>26S proteasome regulatory subunit 8</fullName>
    </recommendedName>
    <alternativeName>
        <fullName>Protein 18-56</fullName>
    </alternativeName>
</protein>
<sequence>MTLTKMEVDSTKGEGFRPYYITKIEELQLIVAEKSQNLRRLQAQRNELNAKVRMLREELQLLQEQGSYVGEVVKPMDKKKVLVKVHPEGKFVVDLDKNVDINDVTANCRVALRNESYTLHKILPNKVDPLVSLMMVEKVPDSTYEMVGGLDKQIKEIKEVIELPVKHPELFDALGIAQPKGVLLYGPPGTGKTLLARAVAHHTECTFIRVSGSELVQKFIGEGSRMVRELFVMAREHAPSIIFMDEIDSIGSSRIESGSGGDSEVQRTMLELLNQLDGFEATKNIKVIMATNRIDILDPALLRPGRIDRKIEFPPPNEEARLDILKIHSRKMNLTRGINLRKIAELMPGASGAEVKGVCTEAGMYALRERRVHVTQEDFEMAVAKVMQKDSEKNMSIKKLWK</sequence>
<accession>P54814</accession>
<name>PRS8_MANSE</name>
<keyword id="KW-0067">ATP-binding</keyword>
<keyword id="KW-0963">Cytoplasm</keyword>
<keyword id="KW-0547">Nucleotide-binding</keyword>
<keyword id="KW-0539">Nucleus</keyword>
<keyword id="KW-0647">Proteasome</keyword>
<comment type="function">
    <text evidence="1">The 26S proteasome is involved in the ATP-dependent degradation of ubiquitinated proteins. The regulatory (or ATPase) complex confers ATP dependency and substrate specificity to the 26S complex (By similarity).</text>
</comment>
<comment type="subcellular location">
    <subcellularLocation>
        <location evidence="3">Cytoplasm</location>
    </subcellularLocation>
    <subcellularLocation>
        <location evidence="3">Nucleus</location>
    </subcellularLocation>
</comment>
<comment type="similarity">
    <text evidence="3">Belongs to the AAA ATPase family.</text>
</comment>
<feature type="chain" id="PRO_0000084728" description="26S proteasome regulatory subunit 8">
    <location>
        <begin position="1"/>
        <end position="402"/>
    </location>
</feature>
<feature type="binding site" evidence="2">
    <location>
        <begin position="186"/>
        <end position="193"/>
    </location>
    <ligand>
        <name>ATP</name>
        <dbReference type="ChEBI" id="CHEBI:30616"/>
    </ligand>
</feature>
<reference key="1">
    <citation type="journal article" date="1996" name="Dev. Biol.">
        <title>A member of the phylogenetically conserved CAD family of transcriptional regulators is dramatically up-regulated during the programmed cell death of skeletal muscle in the tobacco hawkmoth Manduca sexta.</title>
        <authorList>
            <person name="Sun D."/>
            <person name="Sathyanarayana U.G."/>
            <person name="Johnston S.A."/>
            <person name="Schwartz L.M."/>
        </authorList>
    </citation>
    <scope>NUCLEOTIDE SEQUENCE [MRNA]</scope>
</reference>
<organism>
    <name type="scientific">Manduca sexta</name>
    <name type="common">Tobacco hawkmoth</name>
    <name type="synonym">Tobacco hornworm</name>
    <dbReference type="NCBI Taxonomy" id="7130"/>
    <lineage>
        <taxon>Eukaryota</taxon>
        <taxon>Metazoa</taxon>
        <taxon>Ecdysozoa</taxon>
        <taxon>Arthropoda</taxon>
        <taxon>Hexapoda</taxon>
        <taxon>Insecta</taxon>
        <taxon>Pterygota</taxon>
        <taxon>Neoptera</taxon>
        <taxon>Endopterygota</taxon>
        <taxon>Lepidoptera</taxon>
        <taxon>Glossata</taxon>
        <taxon>Ditrysia</taxon>
        <taxon>Bombycoidea</taxon>
        <taxon>Sphingidae</taxon>
        <taxon>Sphinginae</taxon>
        <taxon>Sphingini</taxon>
        <taxon>Manduca</taxon>
    </lineage>
</organism>
<proteinExistence type="evidence at transcript level"/>
<evidence type="ECO:0000250" key="1"/>
<evidence type="ECO:0000255" key="2"/>
<evidence type="ECO:0000305" key="3"/>